<organism>
    <name type="scientific">Arabidopsis thaliana</name>
    <name type="common">Mouse-ear cress</name>
    <dbReference type="NCBI Taxonomy" id="3702"/>
    <lineage>
        <taxon>Eukaryota</taxon>
        <taxon>Viridiplantae</taxon>
        <taxon>Streptophyta</taxon>
        <taxon>Embryophyta</taxon>
        <taxon>Tracheophyta</taxon>
        <taxon>Spermatophyta</taxon>
        <taxon>Magnoliopsida</taxon>
        <taxon>eudicotyledons</taxon>
        <taxon>Gunneridae</taxon>
        <taxon>Pentapetalae</taxon>
        <taxon>rosids</taxon>
        <taxon>malvids</taxon>
        <taxon>Brassicales</taxon>
        <taxon>Brassicaceae</taxon>
        <taxon>Camelineae</taxon>
        <taxon>Arabidopsis</taxon>
    </lineage>
</organism>
<accession>Q9C918</accession>
<protein>
    <recommendedName>
        <fullName>Putative ubiquitin-conjugating enzyme E2 38</fullName>
        <ecNumber>2.3.2.23</ecNumber>
    </recommendedName>
    <alternativeName>
        <fullName>E2 ubiquitin-conjugating enzyme 38</fullName>
    </alternativeName>
    <alternativeName>
        <fullName>Ubiquitin carrier protein 38</fullName>
    </alternativeName>
</protein>
<reference key="1">
    <citation type="journal article" date="2000" name="Nature">
        <title>Sequence and analysis of chromosome 1 of the plant Arabidopsis thaliana.</title>
        <authorList>
            <person name="Theologis A."/>
            <person name="Ecker J.R."/>
            <person name="Palm C.J."/>
            <person name="Federspiel N.A."/>
            <person name="Kaul S."/>
            <person name="White O."/>
            <person name="Alonso J."/>
            <person name="Altafi H."/>
            <person name="Araujo R."/>
            <person name="Bowman C.L."/>
            <person name="Brooks S.Y."/>
            <person name="Buehler E."/>
            <person name="Chan A."/>
            <person name="Chao Q."/>
            <person name="Chen H."/>
            <person name="Cheuk R.F."/>
            <person name="Chin C.W."/>
            <person name="Chung M.K."/>
            <person name="Conn L."/>
            <person name="Conway A.B."/>
            <person name="Conway A.R."/>
            <person name="Creasy T.H."/>
            <person name="Dewar K."/>
            <person name="Dunn P."/>
            <person name="Etgu P."/>
            <person name="Feldblyum T.V."/>
            <person name="Feng J.-D."/>
            <person name="Fong B."/>
            <person name="Fujii C.Y."/>
            <person name="Gill J.E."/>
            <person name="Goldsmith A.D."/>
            <person name="Haas B."/>
            <person name="Hansen N.F."/>
            <person name="Hughes B."/>
            <person name="Huizar L."/>
            <person name="Hunter J.L."/>
            <person name="Jenkins J."/>
            <person name="Johnson-Hopson C."/>
            <person name="Khan S."/>
            <person name="Khaykin E."/>
            <person name="Kim C.J."/>
            <person name="Koo H.L."/>
            <person name="Kremenetskaia I."/>
            <person name="Kurtz D.B."/>
            <person name="Kwan A."/>
            <person name="Lam B."/>
            <person name="Langin-Hooper S."/>
            <person name="Lee A."/>
            <person name="Lee J.M."/>
            <person name="Lenz C.A."/>
            <person name="Li J.H."/>
            <person name="Li Y.-P."/>
            <person name="Lin X."/>
            <person name="Liu S.X."/>
            <person name="Liu Z.A."/>
            <person name="Luros J.S."/>
            <person name="Maiti R."/>
            <person name="Marziali A."/>
            <person name="Militscher J."/>
            <person name="Miranda M."/>
            <person name="Nguyen M."/>
            <person name="Nierman W.C."/>
            <person name="Osborne B.I."/>
            <person name="Pai G."/>
            <person name="Peterson J."/>
            <person name="Pham P.K."/>
            <person name="Rizzo M."/>
            <person name="Rooney T."/>
            <person name="Rowley D."/>
            <person name="Sakano H."/>
            <person name="Salzberg S.L."/>
            <person name="Schwartz J.R."/>
            <person name="Shinn P."/>
            <person name="Southwick A.M."/>
            <person name="Sun H."/>
            <person name="Tallon L.J."/>
            <person name="Tambunga G."/>
            <person name="Toriumi M.J."/>
            <person name="Town C.D."/>
            <person name="Utterback T."/>
            <person name="Van Aken S."/>
            <person name="Vaysberg M."/>
            <person name="Vysotskaia V.S."/>
            <person name="Walker M."/>
            <person name="Wu D."/>
            <person name="Yu G."/>
            <person name="Fraser C.M."/>
            <person name="Venter J.C."/>
            <person name="Davis R.W."/>
        </authorList>
    </citation>
    <scope>NUCLEOTIDE SEQUENCE [LARGE SCALE GENOMIC DNA]</scope>
    <source>
        <strain>cv. Columbia</strain>
    </source>
</reference>
<reference key="2">
    <citation type="journal article" date="2017" name="Plant J.">
        <title>Araport11: a complete reannotation of the Arabidopsis thaliana reference genome.</title>
        <authorList>
            <person name="Cheng C.Y."/>
            <person name="Krishnakumar V."/>
            <person name="Chan A.P."/>
            <person name="Thibaud-Nissen F."/>
            <person name="Schobel S."/>
            <person name="Town C.D."/>
        </authorList>
    </citation>
    <scope>GENOME REANNOTATION</scope>
    <source>
        <strain>cv. Columbia</strain>
    </source>
</reference>
<reference key="3">
    <citation type="journal article" date="2005" name="Plant Physiol.">
        <title>Genome analysis and functional characterization of the E2 and RING-type E3 ligase ubiquitination enzymes of Arabidopsis.</title>
        <authorList>
            <person name="Kraft E."/>
            <person name="Stone S.L."/>
            <person name="Ma L."/>
            <person name="Su N."/>
            <person name="Gao Y."/>
            <person name="Lau O.-S."/>
            <person name="Deng X.-W."/>
            <person name="Callis J."/>
        </authorList>
    </citation>
    <scope>GENE FAMILY</scope>
    <scope>NOMENCLATURE</scope>
</reference>
<dbReference type="EC" id="2.3.2.23"/>
<dbReference type="EMBL" id="AC019018">
    <property type="protein sequence ID" value="AAG52276.1"/>
    <property type="status" value="ALT_SEQ"/>
    <property type="molecule type" value="Genomic_DNA"/>
</dbReference>
<dbReference type="EMBL" id="AC022520">
    <property type="status" value="NOT_ANNOTATED_CDS"/>
    <property type="molecule type" value="Genomic_DNA"/>
</dbReference>
<dbReference type="EMBL" id="CP002684">
    <property type="status" value="NOT_ANNOTATED_CDS"/>
    <property type="molecule type" value="Genomic_DNA"/>
</dbReference>
<dbReference type="SMR" id="Q9C918"/>
<dbReference type="FunCoup" id="Q9C918">
    <property type="interactions" value="32"/>
</dbReference>
<dbReference type="STRING" id="3702.Q9C918"/>
<dbReference type="PeptideAtlas" id="Q9C918"/>
<dbReference type="Araport" id="AT1G53020"/>
<dbReference type="TAIR" id="AT1G53020"/>
<dbReference type="InParanoid" id="Q9C918"/>
<dbReference type="UniPathway" id="UPA00143"/>
<dbReference type="PRO" id="PR:Q9C918"/>
<dbReference type="Proteomes" id="UP000006548">
    <property type="component" value="Chromosome 1"/>
</dbReference>
<dbReference type="ExpressionAtlas" id="Q9C918">
    <property type="expression patterns" value="baseline and differential"/>
</dbReference>
<dbReference type="GO" id="GO:0005524">
    <property type="term" value="F:ATP binding"/>
    <property type="evidence" value="ECO:0007669"/>
    <property type="project" value="UniProtKB-KW"/>
</dbReference>
<dbReference type="GO" id="GO:0061631">
    <property type="term" value="F:ubiquitin conjugating enzyme activity"/>
    <property type="evidence" value="ECO:0000318"/>
    <property type="project" value="GO_Central"/>
</dbReference>
<dbReference type="GO" id="GO:0016567">
    <property type="term" value="P:protein ubiquitination"/>
    <property type="evidence" value="ECO:0007669"/>
    <property type="project" value="UniProtKB-UniPathway"/>
</dbReference>
<dbReference type="CDD" id="cd23837">
    <property type="entry name" value="UBCc_UBE2O"/>
    <property type="match status" value="1"/>
</dbReference>
<dbReference type="FunFam" id="3.10.110.10:FF:000028">
    <property type="entry name" value="Probable ubiquitin-conjugating enzyme E2 23"/>
    <property type="match status" value="1"/>
</dbReference>
<dbReference type="Gene3D" id="3.10.110.10">
    <property type="entry name" value="Ubiquitin Conjugating Enzyme"/>
    <property type="match status" value="1"/>
</dbReference>
<dbReference type="InterPro" id="IPR000608">
    <property type="entry name" value="UBQ-conjugat_E2_core"/>
</dbReference>
<dbReference type="InterPro" id="IPR016135">
    <property type="entry name" value="UBQ-conjugating_enzyme/RWD"/>
</dbReference>
<dbReference type="PANTHER" id="PTHR46116">
    <property type="entry name" value="(E3-INDEPENDENT) E2 UBIQUITIN-CONJUGATING ENZYME"/>
    <property type="match status" value="1"/>
</dbReference>
<dbReference type="PANTHER" id="PTHR46116:SF22">
    <property type="entry name" value="UBIQUITIN-CONJUGATING ENZYME E2 26-RELATED"/>
    <property type="match status" value="1"/>
</dbReference>
<dbReference type="Pfam" id="PF00179">
    <property type="entry name" value="UQ_con"/>
    <property type="match status" value="1"/>
</dbReference>
<dbReference type="SMART" id="SM00212">
    <property type="entry name" value="UBCc"/>
    <property type="match status" value="1"/>
</dbReference>
<dbReference type="SUPFAM" id="SSF54495">
    <property type="entry name" value="UBC-like"/>
    <property type="match status" value="1"/>
</dbReference>
<dbReference type="PROSITE" id="PS50127">
    <property type="entry name" value="UBC_2"/>
    <property type="match status" value="1"/>
</dbReference>
<evidence type="ECO:0000250" key="1">
    <source>
        <dbReference type="UniProtKB" id="P42743"/>
    </source>
</evidence>
<evidence type="ECO:0000255" key="2">
    <source>
        <dbReference type="PROSITE-ProRule" id="PRU00388"/>
    </source>
</evidence>
<evidence type="ECO:0000256" key="3">
    <source>
        <dbReference type="SAM" id="MobiDB-lite"/>
    </source>
</evidence>
<evidence type="ECO:0000305" key="4"/>
<sequence>MNHIKVISLVQYSSSVKKLKEEFLRNFKRFDSVEDFSDHHYVSKGKASKQHSKNWVKKVQDEWKILNQNLPETIFVRACESRMDLLRAVIIGAEGTPYHDGLFFFDIQFPDTYPSVPPNVYYHSGGLRINPNLYNCGKVCLSLLGTWHGNARQSWLPKESTMLQVLVSIQALVLNEQPYFNEPGYGLIKGTWLGESKSKVYSENVFLLSLKTMVYSMRKPPQHFEEYVQNHYFVRSHDIVKACNAYKAGAPLGSMVKGGVQDLEQARQSGSKKFKTDVASFMQTVVDEFVKLGVKELAEKPKPPVNNANTENQSKKKTRKRSRSSR</sequence>
<name>UBC38_ARATH</name>
<feature type="chain" id="PRO_0000430142" description="Putative ubiquitin-conjugating enzyme E2 38">
    <location>
        <begin position="1"/>
        <end position="326"/>
    </location>
</feature>
<feature type="domain" description="UBC core" evidence="2">
    <location>
        <begin position="54"/>
        <end position="214"/>
    </location>
</feature>
<feature type="region of interest" description="Disordered" evidence="3">
    <location>
        <begin position="297"/>
        <end position="326"/>
    </location>
</feature>
<feature type="compositionally biased region" description="Basic residues" evidence="3">
    <location>
        <begin position="315"/>
        <end position="326"/>
    </location>
</feature>
<feature type="active site" description="Glycyl thioester intermediate" evidence="2">
    <location>
        <position position="140"/>
    </location>
</feature>
<proteinExistence type="inferred from homology"/>
<keyword id="KW-0067">ATP-binding</keyword>
<keyword id="KW-0547">Nucleotide-binding</keyword>
<keyword id="KW-1185">Reference proteome</keyword>
<keyword id="KW-0808">Transferase</keyword>
<keyword id="KW-0833">Ubl conjugation pathway</keyword>
<comment type="function">
    <text evidence="1">Accepts the ubiquitin from the E1 complex and catalyzes its covalent attachment to other proteins.</text>
</comment>
<comment type="catalytic activity">
    <reaction evidence="2">
        <text>S-ubiquitinyl-[E1 ubiquitin-activating enzyme]-L-cysteine + [E2 ubiquitin-conjugating enzyme]-L-cysteine = [E1 ubiquitin-activating enzyme]-L-cysteine + S-ubiquitinyl-[E2 ubiquitin-conjugating enzyme]-L-cysteine.</text>
        <dbReference type="EC" id="2.3.2.23"/>
    </reaction>
</comment>
<comment type="pathway">
    <text evidence="2">Protein modification; protein ubiquitination.</text>
</comment>
<comment type="similarity">
    <text evidence="2">Belongs to the ubiquitin-conjugating enzyme family.</text>
</comment>
<comment type="sequence caution" evidence="4">
    <conflict type="erroneous gene model prediction">
        <sequence resource="EMBL-CDS" id="AAG52276"/>
    </conflict>
</comment>
<gene>
    <name type="primary">UBC38</name>
    <name type="ordered locus">At1g53020</name>
    <name type="ORF">F14G24.30</name>
    <name type="ORF">F8L10</name>
</gene>